<protein>
    <recommendedName>
        <fullName evidence="1">Protein PsbN</fullName>
    </recommendedName>
</protein>
<geneLocation type="chloroplast"/>
<sequence length="43" mass="4815">METATLVAIFISCSLVSFTGYALYTAFGQPSKELRDPFEEHED</sequence>
<name>PSBN_LEUSC</name>
<dbReference type="EMBL" id="AF417398">
    <property type="protein sequence ID" value="AAQ03773.1"/>
    <property type="status" value="ALT_INIT"/>
    <property type="molecule type" value="Genomic_DNA"/>
</dbReference>
<dbReference type="SMR" id="Q71NV7"/>
<dbReference type="GO" id="GO:0009535">
    <property type="term" value="C:chloroplast thylakoid membrane"/>
    <property type="evidence" value="ECO:0007669"/>
    <property type="project" value="UniProtKB-SubCell"/>
</dbReference>
<dbReference type="GO" id="GO:0015979">
    <property type="term" value="P:photosynthesis"/>
    <property type="evidence" value="ECO:0007669"/>
    <property type="project" value="InterPro"/>
</dbReference>
<dbReference type="HAMAP" id="MF_00293">
    <property type="entry name" value="PSII_PsbN"/>
    <property type="match status" value="1"/>
</dbReference>
<dbReference type="InterPro" id="IPR003398">
    <property type="entry name" value="PSII_PsbN"/>
</dbReference>
<dbReference type="PANTHER" id="PTHR35326">
    <property type="entry name" value="PROTEIN PSBN"/>
    <property type="match status" value="1"/>
</dbReference>
<dbReference type="PANTHER" id="PTHR35326:SF3">
    <property type="entry name" value="PROTEIN PSBN"/>
    <property type="match status" value="1"/>
</dbReference>
<dbReference type="Pfam" id="PF02468">
    <property type="entry name" value="PsbN"/>
    <property type="match status" value="1"/>
</dbReference>
<proteinExistence type="inferred from homology"/>
<feature type="chain" id="PRO_0000207914" description="Protein PsbN">
    <location>
        <begin position="1"/>
        <end position="43"/>
    </location>
</feature>
<feature type="transmembrane region" description="Helical" evidence="1">
    <location>
        <begin position="5"/>
        <end position="27"/>
    </location>
</feature>
<reference key="1">
    <citation type="submission" date="2001-09" db="EMBL/GenBank/DDBJ databases">
        <title>Phylogeny of moss family Brachytheciaceae based on morphological and molecular trnL-F, ITS2 and psbT-H data.</title>
        <authorList>
            <person name="Huttunen S."/>
            <person name="Ignatov M.S."/>
        </authorList>
    </citation>
    <scope>NUCLEOTIDE SEQUENCE [GENOMIC DNA]</scope>
</reference>
<evidence type="ECO:0000255" key="1">
    <source>
        <dbReference type="HAMAP-Rule" id="MF_00293"/>
    </source>
</evidence>
<evidence type="ECO:0000305" key="2"/>
<accession>Q71NV7</accession>
<organism>
    <name type="scientific">Leucodon sciuroides</name>
    <name type="common">Moss</name>
    <dbReference type="NCBI Taxonomy" id="69533"/>
    <lineage>
        <taxon>Eukaryota</taxon>
        <taxon>Viridiplantae</taxon>
        <taxon>Streptophyta</taxon>
        <taxon>Embryophyta</taxon>
        <taxon>Bryophyta</taxon>
        <taxon>Bryophytina</taxon>
        <taxon>Bryopsida</taxon>
        <taxon>Bryidae</taxon>
        <taxon>Hypnanae</taxon>
        <taxon>Hypnales</taxon>
        <taxon>Leucodontaceae</taxon>
        <taxon>Leucodon</taxon>
    </lineage>
</organism>
<keyword id="KW-0150">Chloroplast</keyword>
<keyword id="KW-0472">Membrane</keyword>
<keyword id="KW-0934">Plastid</keyword>
<keyword id="KW-0793">Thylakoid</keyword>
<keyword id="KW-0812">Transmembrane</keyword>
<keyword id="KW-1133">Transmembrane helix</keyword>
<comment type="function">
    <text evidence="1">May play a role in photosystem I and II biogenesis.</text>
</comment>
<comment type="subcellular location">
    <subcellularLocation>
        <location evidence="1">Plastid</location>
        <location evidence="1">Chloroplast thylakoid membrane</location>
        <topology evidence="1">Single-pass membrane protein</topology>
    </subcellularLocation>
</comment>
<comment type="similarity">
    <text evidence="1">Belongs to the PsbN family.</text>
</comment>
<comment type="caution">
    <text evidence="1">Originally thought to be a component of PSII; based on experiments in Synechocystis, N.tabacum and barley, and its absence from PSII in T.elongatus and T.vulcanus, this is probably not true.</text>
</comment>
<comment type="sequence caution" evidence="2">
    <conflict type="erroneous initiation">
        <sequence resource="EMBL-CDS" id="AAQ03773"/>
    </conflict>
    <text>Extended N-terminus.</text>
</comment>
<gene>
    <name evidence="1" type="primary">psbN</name>
</gene>